<sequence>MSDNITSARATARFVRVSPMKARRVIDLVRGKTVVEALSILKYAPQAASEPVAKVVASAAANAENNFGLDPRTLVISEAYADEGPTMRRFQPRAQGRAFQIRKRSSHITVVVESQKEGAN</sequence>
<accession>Q8FS76</accession>
<dbReference type="EMBL" id="BA000035">
    <property type="protein sequence ID" value="BAC17337.1"/>
    <property type="molecule type" value="Genomic_DNA"/>
</dbReference>
<dbReference type="RefSeq" id="WP_006769800.1">
    <property type="nucleotide sequence ID" value="NC_004369.1"/>
</dbReference>
<dbReference type="SMR" id="Q8FS76"/>
<dbReference type="STRING" id="196164.gene:10740929"/>
<dbReference type="KEGG" id="cef:CE0527"/>
<dbReference type="eggNOG" id="COG0091">
    <property type="taxonomic scope" value="Bacteria"/>
</dbReference>
<dbReference type="HOGENOM" id="CLU_083987_3_2_11"/>
<dbReference type="OrthoDB" id="9805969at2"/>
<dbReference type="Proteomes" id="UP000001409">
    <property type="component" value="Chromosome"/>
</dbReference>
<dbReference type="GO" id="GO:0022625">
    <property type="term" value="C:cytosolic large ribosomal subunit"/>
    <property type="evidence" value="ECO:0007669"/>
    <property type="project" value="TreeGrafter"/>
</dbReference>
<dbReference type="GO" id="GO:0019843">
    <property type="term" value="F:rRNA binding"/>
    <property type="evidence" value="ECO:0007669"/>
    <property type="project" value="UniProtKB-UniRule"/>
</dbReference>
<dbReference type="GO" id="GO:0003735">
    <property type="term" value="F:structural constituent of ribosome"/>
    <property type="evidence" value="ECO:0007669"/>
    <property type="project" value="InterPro"/>
</dbReference>
<dbReference type="GO" id="GO:0006412">
    <property type="term" value="P:translation"/>
    <property type="evidence" value="ECO:0007669"/>
    <property type="project" value="UniProtKB-UniRule"/>
</dbReference>
<dbReference type="CDD" id="cd00336">
    <property type="entry name" value="Ribosomal_L22"/>
    <property type="match status" value="1"/>
</dbReference>
<dbReference type="FunFam" id="3.90.470.10:FF:000002">
    <property type="entry name" value="50S ribosomal protein L22"/>
    <property type="match status" value="1"/>
</dbReference>
<dbReference type="Gene3D" id="3.90.470.10">
    <property type="entry name" value="Ribosomal protein L22/L17"/>
    <property type="match status" value="1"/>
</dbReference>
<dbReference type="HAMAP" id="MF_01331_B">
    <property type="entry name" value="Ribosomal_uL22_B"/>
    <property type="match status" value="1"/>
</dbReference>
<dbReference type="InterPro" id="IPR001063">
    <property type="entry name" value="Ribosomal_uL22"/>
</dbReference>
<dbReference type="InterPro" id="IPR005727">
    <property type="entry name" value="Ribosomal_uL22_bac/chlpt-type"/>
</dbReference>
<dbReference type="InterPro" id="IPR047867">
    <property type="entry name" value="Ribosomal_uL22_bac/org-type"/>
</dbReference>
<dbReference type="InterPro" id="IPR018260">
    <property type="entry name" value="Ribosomal_uL22_CS"/>
</dbReference>
<dbReference type="InterPro" id="IPR036394">
    <property type="entry name" value="Ribosomal_uL22_sf"/>
</dbReference>
<dbReference type="NCBIfam" id="TIGR01044">
    <property type="entry name" value="rplV_bact"/>
    <property type="match status" value="1"/>
</dbReference>
<dbReference type="PANTHER" id="PTHR13501">
    <property type="entry name" value="CHLOROPLAST 50S RIBOSOMAL PROTEIN L22-RELATED"/>
    <property type="match status" value="1"/>
</dbReference>
<dbReference type="PANTHER" id="PTHR13501:SF8">
    <property type="entry name" value="LARGE RIBOSOMAL SUBUNIT PROTEIN UL22M"/>
    <property type="match status" value="1"/>
</dbReference>
<dbReference type="Pfam" id="PF00237">
    <property type="entry name" value="Ribosomal_L22"/>
    <property type="match status" value="1"/>
</dbReference>
<dbReference type="SUPFAM" id="SSF54843">
    <property type="entry name" value="Ribosomal protein L22"/>
    <property type="match status" value="1"/>
</dbReference>
<dbReference type="PROSITE" id="PS00464">
    <property type="entry name" value="RIBOSOMAL_L22"/>
    <property type="match status" value="1"/>
</dbReference>
<organism>
    <name type="scientific">Corynebacterium efficiens (strain DSM 44549 / YS-314 / AJ 12310 / JCM 11189 / NBRC 100395)</name>
    <dbReference type="NCBI Taxonomy" id="196164"/>
    <lineage>
        <taxon>Bacteria</taxon>
        <taxon>Bacillati</taxon>
        <taxon>Actinomycetota</taxon>
        <taxon>Actinomycetes</taxon>
        <taxon>Mycobacteriales</taxon>
        <taxon>Corynebacteriaceae</taxon>
        <taxon>Corynebacterium</taxon>
    </lineage>
</organism>
<reference key="1">
    <citation type="journal article" date="2003" name="Genome Res.">
        <title>Comparative complete genome sequence analysis of the amino acid replacements responsible for the thermostability of Corynebacterium efficiens.</title>
        <authorList>
            <person name="Nishio Y."/>
            <person name="Nakamura Y."/>
            <person name="Kawarabayasi Y."/>
            <person name="Usuda Y."/>
            <person name="Kimura E."/>
            <person name="Sugimoto S."/>
            <person name="Matsui K."/>
            <person name="Yamagishi A."/>
            <person name="Kikuchi H."/>
            <person name="Ikeo K."/>
            <person name="Gojobori T."/>
        </authorList>
    </citation>
    <scope>NUCLEOTIDE SEQUENCE [LARGE SCALE GENOMIC DNA]</scope>
    <source>
        <strain>DSM 44549 / YS-314 / AJ 12310 / JCM 11189 / NBRC 100395</strain>
    </source>
</reference>
<protein>
    <recommendedName>
        <fullName evidence="1">Large ribosomal subunit protein uL22</fullName>
    </recommendedName>
    <alternativeName>
        <fullName evidence="2">50S ribosomal protein L22</fullName>
    </alternativeName>
</protein>
<comment type="function">
    <text evidence="1">This protein binds specifically to 23S rRNA; its binding is stimulated by other ribosomal proteins, e.g. L4, L17, and L20. It is important during the early stages of 50S assembly. It makes multiple contacts with different domains of the 23S rRNA in the assembled 50S subunit and ribosome (By similarity).</text>
</comment>
<comment type="function">
    <text evidence="1">The globular domain of the protein is located near the polypeptide exit tunnel on the outside of the subunit, while an extended beta-hairpin is found that lines the wall of the exit tunnel in the center of the 70S ribosome.</text>
</comment>
<comment type="subunit">
    <text evidence="1">Part of the 50S ribosomal subunit.</text>
</comment>
<comment type="similarity">
    <text evidence="1">Belongs to the universal ribosomal protein uL22 family.</text>
</comment>
<name>RL22_COREF</name>
<keyword id="KW-1185">Reference proteome</keyword>
<keyword id="KW-0687">Ribonucleoprotein</keyword>
<keyword id="KW-0689">Ribosomal protein</keyword>
<keyword id="KW-0694">RNA-binding</keyword>
<keyword id="KW-0699">rRNA-binding</keyword>
<feature type="chain" id="PRO_0000125148" description="Large ribosomal subunit protein uL22">
    <location>
        <begin position="1"/>
        <end position="120"/>
    </location>
</feature>
<gene>
    <name evidence="1" type="primary">rplV</name>
    <name type="ordered locus">CE0527</name>
</gene>
<evidence type="ECO:0000255" key="1">
    <source>
        <dbReference type="HAMAP-Rule" id="MF_01331"/>
    </source>
</evidence>
<evidence type="ECO:0000305" key="2"/>
<proteinExistence type="inferred from homology"/>